<comment type="function">
    <text evidence="2">Mitochondrial GTPase that mediates the disassembly of ribosomes from messenger RNA at the termination of mitochondrial protein biosynthesis. Not involved in the GTP-dependent ribosomal translocation step during translation elongation.</text>
</comment>
<comment type="subcellular location">
    <subcellularLocation>
        <location evidence="2">Mitochondrion</location>
    </subcellularLocation>
</comment>
<comment type="similarity">
    <text evidence="2">Belongs to the TRAFAC class translation factor GTPase superfamily. Classic translation factor GTPase family. EF-G/EF-2 subfamily.</text>
</comment>
<accession>B4GNT0</accession>
<gene>
    <name evidence="1" type="primary">mRRF2</name>
    <name evidence="1" type="synonym">EF-G2</name>
    <name type="ORF">GL13749</name>
</gene>
<name>RRF2M_DROPE</name>
<keyword id="KW-0342">GTP-binding</keyword>
<keyword id="KW-0496">Mitochondrion</keyword>
<keyword id="KW-0547">Nucleotide-binding</keyword>
<keyword id="KW-0648">Protein biosynthesis</keyword>
<keyword id="KW-1185">Reference proteome</keyword>
<keyword id="KW-0809">Transit peptide</keyword>
<protein>
    <recommendedName>
        <fullName evidence="2">Ribosome-releasing factor 2, mitochondrial</fullName>
        <shortName evidence="2">RRF2mt</shortName>
    </recommendedName>
    <alternativeName>
        <fullName evidence="2">Elongation factor G 2, mitochondrial</fullName>
        <shortName evidence="2">EF-G2mt</shortName>
        <shortName evidence="2">mEF-G 2</shortName>
    </alternativeName>
</protein>
<sequence length="737" mass="81417">MLKYALHSGGMPRNRLLRQLSAYIFRRSYSSNIRNIGILAHIDAGKTTTTERMLFYSGKTRSLGEVHRGNTVTDYLTQERERGITICSSAVTFPWSGNRINLLDTPGHIDFTMEVEQSLYAVDGVVVVLDGTAGVEAQTVTVWTQADKHKLPRLAFVNKMDRPDADFDKCVNDLRTKLETQPVCIQYPSKNQDGLLAINDVITLEQLTWQPKDLGRSYSKTKLEPSDDLRQLQEKRNELIDQLSGLDDELADVVISTESFDNVSNALIERALRRATCQQKVVPVLLGSAYKNVGIQRLMDAVNTYLPAPEERNQIYDCFGNEVAGKVFKIVHDKQRGPLTLVRILRGEIKRGMRLICSRGQAEVVSKLYEPLADEYREVGAVQSGDVVICAGLKSTVTGDLLTSSQTALRNAQKRLKQSQGTVSADEDEELDTDELFGIDRQIPDAVYFCSIEPPSVSSQTAMEQALRQLQREDPSLRVSYDSVTGQTVLGGMGELHMDIIKSRILSEYKIDVDLGPLQIAYKETIESPSLTTLSVEKEIAGSKQNVSLTLEVVKDHDELFSLDKSPENLSNLNTLRPRTLQVIRKGSVSALERGPRVGGQVVDTQIRLHNAIIGRGTADSFVMATAAQCVQKLLSTSGTRLLEPIMALQIVAPSERISGIMADLSRRRALINDVLPKGERNKMILVNAPLAELSGYSSALRTISSGTASMTMQPSGFSGMNAVDESLAERRVQGLE</sequence>
<reference key="1">
    <citation type="journal article" date="2007" name="Nature">
        <title>Evolution of genes and genomes on the Drosophila phylogeny.</title>
        <authorList>
            <consortium name="Drosophila 12 genomes consortium"/>
        </authorList>
    </citation>
    <scope>NUCLEOTIDE SEQUENCE [LARGE SCALE GENOMIC DNA]</scope>
    <source>
        <strain>MSH-3 / Tucson 14011-0111.49</strain>
    </source>
</reference>
<proteinExistence type="inferred from homology"/>
<dbReference type="EMBL" id="CH479186">
    <property type="protein sequence ID" value="EDW38813.1"/>
    <property type="molecule type" value="Genomic_DNA"/>
</dbReference>
<dbReference type="RefSeq" id="XP_002020001.1">
    <property type="nucleotide sequence ID" value="XM_002019965.1"/>
</dbReference>
<dbReference type="SMR" id="B4GNT0"/>
<dbReference type="STRING" id="7234.B4GNT0"/>
<dbReference type="EnsemblMetazoa" id="FBtr0179364">
    <property type="protein sequence ID" value="FBpp0177856"/>
    <property type="gene ID" value="FBgn0151354"/>
</dbReference>
<dbReference type="EnsemblMetazoa" id="XM_002019965.2">
    <property type="protein sequence ID" value="XP_002020001.2"/>
    <property type="gene ID" value="LOC6594882"/>
</dbReference>
<dbReference type="GeneID" id="6594882"/>
<dbReference type="KEGG" id="dpe:6594882"/>
<dbReference type="CTD" id="42670"/>
<dbReference type="eggNOG" id="KOG0464">
    <property type="taxonomic scope" value="Eukaryota"/>
</dbReference>
<dbReference type="HOGENOM" id="CLU_002794_4_1_1"/>
<dbReference type="OMA" id="GPQFTFP"/>
<dbReference type="OrthoDB" id="198619at2759"/>
<dbReference type="PhylomeDB" id="B4GNT0"/>
<dbReference type="Proteomes" id="UP000008744">
    <property type="component" value="Unassembled WGS sequence"/>
</dbReference>
<dbReference type="GO" id="GO:0005739">
    <property type="term" value="C:mitochondrion"/>
    <property type="evidence" value="ECO:0007669"/>
    <property type="project" value="UniProtKB-SubCell"/>
</dbReference>
<dbReference type="GO" id="GO:0005525">
    <property type="term" value="F:GTP binding"/>
    <property type="evidence" value="ECO:0007669"/>
    <property type="project" value="UniProtKB-UniRule"/>
</dbReference>
<dbReference type="GO" id="GO:0003924">
    <property type="term" value="F:GTPase activity"/>
    <property type="evidence" value="ECO:0000250"/>
    <property type="project" value="UniProtKB"/>
</dbReference>
<dbReference type="GO" id="GO:0032543">
    <property type="term" value="P:mitochondrial translation"/>
    <property type="evidence" value="ECO:0000250"/>
    <property type="project" value="UniProtKB"/>
</dbReference>
<dbReference type="GO" id="GO:0032790">
    <property type="term" value="P:ribosome disassembly"/>
    <property type="evidence" value="ECO:0000250"/>
    <property type="project" value="UniProtKB"/>
</dbReference>
<dbReference type="CDD" id="cd16262">
    <property type="entry name" value="EFG_III"/>
    <property type="match status" value="1"/>
</dbReference>
<dbReference type="CDD" id="cd03713">
    <property type="entry name" value="EFG_mtEFG_C"/>
    <property type="match status" value="1"/>
</dbReference>
<dbReference type="FunFam" id="3.30.70.240:FF:000001">
    <property type="entry name" value="Elongation factor G"/>
    <property type="match status" value="1"/>
</dbReference>
<dbReference type="FunFam" id="2.40.30.10:FF:000203">
    <property type="entry name" value="Ribosome-releasing factor 2, mitochondrial"/>
    <property type="match status" value="1"/>
</dbReference>
<dbReference type="FunFam" id="3.30.230.10:FF:000033">
    <property type="entry name" value="Ribosome-releasing factor 2, mitochondrial"/>
    <property type="match status" value="1"/>
</dbReference>
<dbReference type="FunFam" id="3.30.70.870:FF:000005">
    <property type="entry name" value="Ribosome-releasing factor 2, mitochondrial"/>
    <property type="match status" value="1"/>
</dbReference>
<dbReference type="FunFam" id="3.40.50.300:FF:000514">
    <property type="entry name" value="Ribosome-releasing factor 2, mitochondrial"/>
    <property type="match status" value="1"/>
</dbReference>
<dbReference type="Gene3D" id="3.30.230.10">
    <property type="match status" value="1"/>
</dbReference>
<dbReference type="Gene3D" id="3.30.70.240">
    <property type="match status" value="1"/>
</dbReference>
<dbReference type="Gene3D" id="3.30.70.870">
    <property type="entry name" value="Elongation Factor G (Translational Gtpase), domain 3"/>
    <property type="match status" value="1"/>
</dbReference>
<dbReference type="Gene3D" id="3.40.50.300">
    <property type="entry name" value="P-loop containing nucleotide triphosphate hydrolases"/>
    <property type="match status" value="1"/>
</dbReference>
<dbReference type="Gene3D" id="2.40.30.10">
    <property type="entry name" value="Translation factors"/>
    <property type="match status" value="1"/>
</dbReference>
<dbReference type="HAMAP" id="MF_03059">
    <property type="entry name" value="mEF_G_2"/>
    <property type="match status" value="1"/>
</dbReference>
<dbReference type="InterPro" id="IPR053905">
    <property type="entry name" value="EF-G-like_DII"/>
</dbReference>
<dbReference type="InterPro" id="IPR030851">
    <property type="entry name" value="EFG2"/>
</dbReference>
<dbReference type="InterPro" id="IPR041095">
    <property type="entry name" value="EFG_II"/>
</dbReference>
<dbReference type="InterPro" id="IPR009022">
    <property type="entry name" value="EFG_III"/>
</dbReference>
<dbReference type="InterPro" id="IPR035647">
    <property type="entry name" value="EFG_III/V"/>
</dbReference>
<dbReference type="InterPro" id="IPR035649">
    <property type="entry name" value="EFG_V"/>
</dbReference>
<dbReference type="InterPro" id="IPR000640">
    <property type="entry name" value="EFG_V-like"/>
</dbReference>
<dbReference type="InterPro" id="IPR031157">
    <property type="entry name" value="G_TR_CS"/>
</dbReference>
<dbReference type="InterPro" id="IPR027417">
    <property type="entry name" value="P-loop_NTPase"/>
</dbReference>
<dbReference type="InterPro" id="IPR020568">
    <property type="entry name" value="Ribosomal_Su5_D2-typ_SF"/>
</dbReference>
<dbReference type="InterPro" id="IPR014721">
    <property type="entry name" value="Ribsml_uS5_D2-typ_fold_subgr"/>
</dbReference>
<dbReference type="InterPro" id="IPR005225">
    <property type="entry name" value="Small_GTP-bd"/>
</dbReference>
<dbReference type="InterPro" id="IPR000795">
    <property type="entry name" value="T_Tr_GTP-bd_dom"/>
</dbReference>
<dbReference type="InterPro" id="IPR009000">
    <property type="entry name" value="Transl_B-barrel_sf"/>
</dbReference>
<dbReference type="NCBIfam" id="TIGR00231">
    <property type="entry name" value="small_GTP"/>
    <property type="match status" value="1"/>
</dbReference>
<dbReference type="PANTHER" id="PTHR43261:SF1">
    <property type="entry name" value="RIBOSOME-RELEASING FACTOR 2, MITOCHONDRIAL"/>
    <property type="match status" value="1"/>
</dbReference>
<dbReference type="PANTHER" id="PTHR43261">
    <property type="entry name" value="TRANSLATION ELONGATION FACTOR G-RELATED"/>
    <property type="match status" value="1"/>
</dbReference>
<dbReference type="Pfam" id="PF22042">
    <property type="entry name" value="EF-G_D2"/>
    <property type="match status" value="1"/>
</dbReference>
<dbReference type="Pfam" id="PF00679">
    <property type="entry name" value="EFG_C"/>
    <property type="match status" value="1"/>
</dbReference>
<dbReference type="Pfam" id="PF14492">
    <property type="entry name" value="EFG_III"/>
    <property type="match status" value="1"/>
</dbReference>
<dbReference type="Pfam" id="PF00009">
    <property type="entry name" value="GTP_EFTU"/>
    <property type="match status" value="1"/>
</dbReference>
<dbReference type="PRINTS" id="PR00315">
    <property type="entry name" value="ELONGATNFCT"/>
</dbReference>
<dbReference type="SMART" id="SM00838">
    <property type="entry name" value="EFG_C"/>
    <property type="match status" value="1"/>
</dbReference>
<dbReference type="SUPFAM" id="SSF54980">
    <property type="entry name" value="EF-G C-terminal domain-like"/>
    <property type="match status" value="2"/>
</dbReference>
<dbReference type="SUPFAM" id="SSF52540">
    <property type="entry name" value="P-loop containing nucleoside triphosphate hydrolases"/>
    <property type="match status" value="1"/>
</dbReference>
<dbReference type="SUPFAM" id="SSF54211">
    <property type="entry name" value="Ribosomal protein S5 domain 2-like"/>
    <property type="match status" value="1"/>
</dbReference>
<dbReference type="SUPFAM" id="SSF50447">
    <property type="entry name" value="Translation proteins"/>
    <property type="match status" value="1"/>
</dbReference>
<dbReference type="PROSITE" id="PS00301">
    <property type="entry name" value="G_TR_1"/>
    <property type="match status" value="1"/>
</dbReference>
<dbReference type="PROSITE" id="PS51722">
    <property type="entry name" value="G_TR_2"/>
    <property type="match status" value="1"/>
</dbReference>
<organism>
    <name type="scientific">Drosophila persimilis</name>
    <name type="common">Fruit fly</name>
    <dbReference type="NCBI Taxonomy" id="7234"/>
    <lineage>
        <taxon>Eukaryota</taxon>
        <taxon>Metazoa</taxon>
        <taxon>Ecdysozoa</taxon>
        <taxon>Arthropoda</taxon>
        <taxon>Hexapoda</taxon>
        <taxon>Insecta</taxon>
        <taxon>Pterygota</taxon>
        <taxon>Neoptera</taxon>
        <taxon>Endopterygota</taxon>
        <taxon>Diptera</taxon>
        <taxon>Brachycera</taxon>
        <taxon>Muscomorpha</taxon>
        <taxon>Ephydroidea</taxon>
        <taxon>Drosophilidae</taxon>
        <taxon>Drosophila</taxon>
        <taxon>Sophophora</taxon>
    </lineage>
</organism>
<evidence type="ECO:0000250" key="1">
    <source>
        <dbReference type="UniProtKB" id="Q9VCX4"/>
    </source>
</evidence>
<evidence type="ECO:0000255" key="2">
    <source>
        <dbReference type="HAMAP-Rule" id="MF_03059"/>
    </source>
</evidence>
<feature type="transit peptide" description="Mitochondrion" evidence="2">
    <location>
        <begin position="1"/>
        <end position="29"/>
    </location>
</feature>
<feature type="chain" id="PRO_0000385602" description="Ribosome-releasing factor 2, mitochondrial">
    <location>
        <begin position="30"/>
        <end position="737"/>
    </location>
</feature>
<feature type="domain" description="tr-type G">
    <location>
        <begin position="31"/>
        <end position="310"/>
    </location>
</feature>
<feature type="binding site" evidence="2">
    <location>
        <begin position="40"/>
        <end position="47"/>
    </location>
    <ligand>
        <name>GTP</name>
        <dbReference type="ChEBI" id="CHEBI:37565"/>
    </ligand>
</feature>
<feature type="binding site" evidence="2">
    <location>
        <begin position="104"/>
        <end position="108"/>
    </location>
    <ligand>
        <name>GTP</name>
        <dbReference type="ChEBI" id="CHEBI:37565"/>
    </ligand>
</feature>
<feature type="binding site" evidence="2">
    <location>
        <begin position="158"/>
        <end position="161"/>
    </location>
    <ligand>
        <name>GTP</name>
        <dbReference type="ChEBI" id="CHEBI:37565"/>
    </ligand>
</feature>